<feature type="chain" id="PRO_1000128837" description="Adenosine deaminase">
    <location>
        <begin position="1"/>
        <end position="335"/>
    </location>
</feature>
<feature type="active site" description="Proton donor" evidence="1">
    <location>
        <position position="200"/>
    </location>
</feature>
<feature type="binding site" evidence="1">
    <location>
        <position position="12"/>
    </location>
    <ligand>
        <name>Zn(2+)</name>
        <dbReference type="ChEBI" id="CHEBI:29105"/>
        <note>catalytic</note>
    </ligand>
</feature>
<feature type="binding site" evidence="1">
    <location>
        <position position="14"/>
    </location>
    <ligand>
        <name>substrate</name>
    </ligand>
</feature>
<feature type="binding site" evidence="1">
    <location>
        <position position="14"/>
    </location>
    <ligand>
        <name>Zn(2+)</name>
        <dbReference type="ChEBI" id="CHEBI:29105"/>
        <note>catalytic</note>
    </ligand>
</feature>
<feature type="binding site" evidence="1">
    <location>
        <position position="16"/>
    </location>
    <ligand>
        <name>substrate</name>
    </ligand>
</feature>
<feature type="binding site" evidence="1">
    <location>
        <position position="197"/>
    </location>
    <ligand>
        <name>Zn(2+)</name>
        <dbReference type="ChEBI" id="CHEBI:29105"/>
        <note>catalytic</note>
    </ligand>
</feature>
<feature type="binding site" evidence="1">
    <location>
        <position position="278"/>
    </location>
    <ligand>
        <name>Zn(2+)</name>
        <dbReference type="ChEBI" id="CHEBI:29105"/>
        <note>catalytic</note>
    </ligand>
</feature>
<feature type="site" description="Important for catalytic activity" evidence="1">
    <location>
        <position position="221"/>
    </location>
</feature>
<dbReference type="EC" id="3.5.4.4" evidence="1"/>
<dbReference type="EMBL" id="CP000962">
    <property type="protein sequence ID" value="ACA56094.1"/>
    <property type="molecule type" value="Genomic_DNA"/>
</dbReference>
<dbReference type="RefSeq" id="WP_012343997.1">
    <property type="nucleotide sequence ID" value="NC_010520.1"/>
</dbReference>
<dbReference type="SMR" id="B1KY93"/>
<dbReference type="KEGG" id="cbl:CLK_0436"/>
<dbReference type="HOGENOM" id="CLU_039228_0_0_9"/>
<dbReference type="GO" id="GO:0005829">
    <property type="term" value="C:cytosol"/>
    <property type="evidence" value="ECO:0007669"/>
    <property type="project" value="TreeGrafter"/>
</dbReference>
<dbReference type="GO" id="GO:0046936">
    <property type="term" value="F:2'-deoxyadenosine deaminase activity"/>
    <property type="evidence" value="ECO:0007669"/>
    <property type="project" value="RHEA"/>
</dbReference>
<dbReference type="GO" id="GO:0004000">
    <property type="term" value="F:adenosine deaminase activity"/>
    <property type="evidence" value="ECO:0007669"/>
    <property type="project" value="UniProtKB-UniRule"/>
</dbReference>
<dbReference type="GO" id="GO:0008270">
    <property type="term" value="F:zinc ion binding"/>
    <property type="evidence" value="ECO:0007669"/>
    <property type="project" value="UniProtKB-UniRule"/>
</dbReference>
<dbReference type="GO" id="GO:0006154">
    <property type="term" value="P:adenosine catabolic process"/>
    <property type="evidence" value="ECO:0007669"/>
    <property type="project" value="TreeGrafter"/>
</dbReference>
<dbReference type="GO" id="GO:0043103">
    <property type="term" value="P:hypoxanthine salvage"/>
    <property type="evidence" value="ECO:0007669"/>
    <property type="project" value="TreeGrafter"/>
</dbReference>
<dbReference type="GO" id="GO:0046103">
    <property type="term" value="P:inosine biosynthetic process"/>
    <property type="evidence" value="ECO:0007669"/>
    <property type="project" value="TreeGrafter"/>
</dbReference>
<dbReference type="GO" id="GO:0009117">
    <property type="term" value="P:nucleotide metabolic process"/>
    <property type="evidence" value="ECO:0007669"/>
    <property type="project" value="UniProtKB-KW"/>
</dbReference>
<dbReference type="GO" id="GO:0009168">
    <property type="term" value="P:purine ribonucleoside monophosphate biosynthetic process"/>
    <property type="evidence" value="ECO:0007669"/>
    <property type="project" value="UniProtKB-UniRule"/>
</dbReference>
<dbReference type="CDD" id="cd01320">
    <property type="entry name" value="ADA"/>
    <property type="match status" value="1"/>
</dbReference>
<dbReference type="FunFam" id="3.20.20.140:FF:000093">
    <property type="entry name" value="Adenosine deaminase"/>
    <property type="match status" value="1"/>
</dbReference>
<dbReference type="Gene3D" id="3.20.20.140">
    <property type="entry name" value="Metal-dependent hydrolases"/>
    <property type="match status" value="1"/>
</dbReference>
<dbReference type="HAMAP" id="MF_00540">
    <property type="entry name" value="A_deaminase"/>
    <property type="match status" value="1"/>
</dbReference>
<dbReference type="InterPro" id="IPR028893">
    <property type="entry name" value="A_deaminase"/>
</dbReference>
<dbReference type="InterPro" id="IPR001365">
    <property type="entry name" value="A_deaminase_dom"/>
</dbReference>
<dbReference type="InterPro" id="IPR006330">
    <property type="entry name" value="Ado/ade_deaminase"/>
</dbReference>
<dbReference type="InterPro" id="IPR032466">
    <property type="entry name" value="Metal_Hydrolase"/>
</dbReference>
<dbReference type="NCBIfam" id="TIGR01430">
    <property type="entry name" value="aden_deam"/>
    <property type="match status" value="1"/>
</dbReference>
<dbReference type="PANTHER" id="PTHR11409">
    <property type="entry name" value="ADENOSINE DEAMINASE"/>
    <property type="match status" value="1"/>
</dbReference>
<dbReference type="PANTHER" id="PTHR11409:SF43">
    <property type="entry name" value="ADENOSINE DEAMINASE"/>
    <property type="match status" value="1"/>
</dbReference>
<dbReference type="Pfam" id="PF00962">
    <property type="entry name" value="A_deaminase"/>
    <property type="match status" value="1"/>
</dbReference>
<dbReference type="SUPFAM" id="SSF51556">
    <property type="entry name" value="Metallo-dependent hydrolases"/>
    <property type="match status" value="1"/>
</dbReference>
<evidence type="ECO:0000255" key="1">
    <source>
        <dbReference type="HAMAP-Rule" id="MF_00540"/>
    </source>
</evidence>
<gene>
    <name evidence="1" type="primary">add</name>
    <name type="ordered locus">CLK_0436</name>
</gene>
<keyword id="KW-0378">Hydrolase</keyword>
<keyword id="KW-0479">Metal-binding</keyword>
<keyword id="KW-0546">Nucleotide metabolism</keyword>
<keyword id="KW-0862">Zinc</keyword>
<accession>B1KY93</accession>
<sequence length="335" mass="37714">MNFKKLPKIELHCHLDGSLRVDTILDIAKKDNIHLPSYNKKELINYVSIMDDCNSLDEYLNKFFIPNKVMQTKENLKRIAFELLEDVAADNVKYIEVRFAPLLHVEKGLNIEEIIESVLEGIKEAEKLYDIKGNLILGCMRNMDIPSAFEVVKKGAKFIGKGVVAIDLCAGEEPHFPGKYIEVLKLAKECGYRITIHAGEAGVGENVLEAINLLNAERIGHGIYIKDCAEAYKLVKEKNIPLEVCPTSNLHTKAFESYETHPFMDFLKDGIKVTINTDNMTVSNTTITKELEMLNKFCGLSIGDYKILYLNAVEASFASSETKEVLKSYVKEITA</sequence>
<name>ADD_CLOBM</name>
<comment type="function">
    <text evidence="1">Catalyzes the hydrolytic deamination of adenosine and 2-deoxyadenosine.</text>
</comment>
<comment type="catalytic activity">
    <reaction evidence="1">
        <text>adenosine + H2O + H(+) = inosine + NH4(+)</text>
        <dbReference type="Rhea" id="RHEA:24408"/>
        <dbReference type="ChEBI" id="CHEBI:15377"/>
        <dbReference type="ChEBI" id="CHEBI:15378"/>
        <dbReference type="ChEBI" id="CHEBI:16335"/>
        <dbReference type="ChEBI" id="CHEBI:17596"/>
        <dbReference type="ChEBI" id="CHEBI:28938"/>
        <dbReference type="EC" id="3.5.4.4"/>
    </reaction>
    <physiologicalReaction direction="left-to-right" evidence="1">
        <dbReference type="Rhea" id="RHEA:24409"/>
    </physiologicalReaction>
</comment>
<comment type="catalytic activity">
    <reaction evidence="1">
        <text>2'-deoxyadenosine + H2O + H(+) = 2'-deoxyinosine + NH4(+)</text>
        <dbReference type="Rhea" id="RHEA:28190"/>
        <dbReference type="ChEBI" id="CHEBI:15377"/>
        <dbReference type="ChEBI" id="CHEBI:15378"/>
        <dbReference type="ChEBI" id="CHEBI:17256"/>
        <dbReference type="ChEBI" id="CHEBI:28938"/>
        <dbReference type="ChEBI" id="CHEBI:28997"/>
        <dbReference type="EC" id="3.5.4.4"/>
    </reaction>
    <physiologicalReaction direction="left-to-right" evidence="1">
        <dbReference type="Rhea" id="RHEA:28191"/>
    </physiologicalReaction>
</comment>
<comment type="cofactor">
    <cofactor evidence="1">
        <name>Zn(2+)</name>
        <dbReference type="ChEBI" id="CHEBI:29105"/>
    </cofactor>
    <text evidence="1">Binds 1 zinc ion per subunit.</text>
</comment>
<comment type="similarity">
    <text evidence="1">Belongs to the metallo-dependent hydrolases superfamily. Adenosine and AMP deaminases family. Adenosine deaminase subfamily.</text>
</comment>
<protein>
    <recommendedName>
        <fullName evidence="1">Adenosine deaminase</fullName>
        <ecNumber evidence="1">3.5.4.4</ecNumber>
    </recommendedName>
    <alternativeName>
        <fullName evidence="1">Adenosine aminohydrolase</fullName>
    </alternativeName>
</protein>
<organism>
    <name type="scientific">Clostridium botulinum (strain Loch Maree / Type A3)</name>
    <dbReference type="NCBI Taxonomy" id="498214"/>
    <lineage>
        <taxon>Bacteria</taxon>
        <taxon>Bacillati</taxon>
        <taxon>Bacillota</taxon>
        <taxon>Clostridia</taxon>
        <taxon>Eubacteriales</taxon>
        <taxon>Clostridiaceae</taxon>
        <taxon>Clostridium</taxon>
    </lineage>
</organism>
<proteinExistence type="inferred from homology"/>
<reference key="1">
    <citation type="journal article" date="2007" name="PLoS ONE">
        <title>Analysis of the neurotoxin complex genes in Clostridium botulinum A1-A4 and B1 strains: BoNT/A3, /Ba4 and /B1 clusters are located within plasmids.</title>
        <authorList>
            <person name="Smith T.J."/>
            <person name="Hill K.K."/>
            <person name="Foley B.T."/>
            <person name="Detter J.C."/>
            <person name="Munk A.C."/>
            <person name="Bruce D.C."/>
            <person name="Doggett N.A."/>
            <person name="Smith L.A."/>
            <person name="Marks J.D."/>
            <person name="Xie G."/>
            <person name="Brettin T.S."/>
        </authorList>
    </citation>
    <scope>NUCLEOTIDE SEQUENCE [LARGE SCALE GENOMIC DNA]</scope>
    <source>
        <strain>Loch Maree / Type A3</strain>
    </source>
</reference>